<evidence type="ECO:0000255" key="1">
    <source>
        <dbReference type="HAMAP-Rule" id="MF_00144"/>
    </source>
</evidence>
<keyword id="KW-0067">ATP-binding</keyword>
<keyword id="KW-0963">Cytoplasm</keyword>
<keyword id="KW-1015">Disulfide bond</keyword>
<keyword id="KW-0547">Nucleotide-binding</keyword>
<keyword id="KW-0694">RNA-binding</keyword>
<keyword id="KW-0808">Transferase</keyword>
<keyword id="KW-0819">tRNA processing</keyword>
<keyword id="KW-0820">tRNA-binding</keyword>
<dbReference type="EC" id="2.8.1.13" evidence="1"/>
<dbReference type="EMBL" id="CP000025">
    <property type="protein sequence ID" value="AAW34644.1"/>
    <property type="molecule type" value="Genomic_DNA"/>
</dbReference>
<dbReference type="RefSeq" id="WP_002851977.1">
    <property type="nucleotide sequence ID" value="NC_003912.7"/>
</dbReference>
<dbReference type="SMR" id="Q5HXB2"/>
<dbReference type="KEGG" id="cjr:CJE0048"/>
<dbReference type="HOGENOM" id="CLU_035188_0_0_7"/>
<dbReference type="GO" id="GO:0005737">
    <property type="term" value="C:cytoplasm"/>
    <property type="evidence" value="ECO:0007669"/>
    <property type="project" value="UniProtKB-SubCell"/>
</dbReference>
<dbReference type="GO" id="GO:0005524">
    <property type="term" value="F:ATP binding"/>
    <property type="evidence" value="ECO:0007669"/>
    <property type="project" value="UniProtKB-KW"/>
</dbReference>
<dbReference type="GO" id="GO:0000049">
    <property type="term" value="F:tRNA binding"/>
    <property type="evidence" value="ECO:0007669"/>
    <property type="project" value="UniProtKB-KW"/>
</dbReference>
<dbReference type="GO" id="GO:0103016">
    <property type="term" value="F:tRNA-uridine 2-sulfurtransferase activity"/>
    <property type="evidence" value="ECO:0007669"/>
    <property type="project" value="UniProtKB-EC"/>
</dbReference>
<dbReference type="GO" id="GO:0002143">
    <property type="term" value="P:tRNA wobble position uridine thiolation"/>
    <property type="evidence" value="ECO:0007669"/>
    <property type="project" value="TreeGrafter"/>
</dbReference>
<dbReference type="CDD" id="cd01998">
    <property type="entry name" value="MnmA_TRMU-like"/>
    <property type="match status" value="1"/>
</dbReference>
<dbReference type="FunFam" id="2.30.30.280:FF:000001">
    <property type="entry name" value="tRNA-specific 2-thiouridylase MnmA"/>
    <property type="match status" value="1"/>
</dbReference>
<dbReference type="Gene3D" id="2.30.30.280">
    <property type="entry name" value="Adenine nucleotide alpha hydrolases-like domains"/>
    <property type="match status" value="1"/>
</dbReference>
<dbReference type="Gene3D" id="3.40.50.620">
    <property type="entry name" value="HUPs"/>
    <property type="match status" value="1"/>
</dbReference>
<dbReference type="Gene3D" id="2.40.30.10">
    <property type="entry name" value="Translation factors"/>
    <property type="match status" value="1"/>
</dbReference>
<dbReference type="HAMAP" id="MF_00144">
    <property type="entry name" value="tRNA_thiouridyl_MnmA"/>
    <property type="match status" value="1"/>
</dbReference>
<dbReference type="InterPro" id="IPR004506">
    <property type="entry name" value="MnmA-like"/>
</dbReference>
<dbReference type="InterPro" id="IPR046885">
    <property type="entry name" value="MnmA-like_C"/>
</dbReference>
<dbReference type="InterPro" id="IPR046884">
    <property type="entry name" value="MnmA-like_central"/>
</dbReference>
<dbReference type="InterPro" id="IPR023382">
    <property type="entry name" value="MnmA-like_central_sf"/>
</dbReference>
<dbReference type="InterPro" id="IPR014729">
    <property type="entry name" value="Rossmann-like_a/b/a_fold"/>
</dbReference>
<dbReference type="NCBIfam" id="NF001138">
    <property type="entry name" value="PRK00143.1"/>
    <property type="match status" value="1"/>
</dbReference>
<dbReference type="NCBIfam" id="TIGR00420">
    <property type="entry name" value="trmU"/>
    <property type="match status" value="1"/>
</dbReference>
<dbReference type="PANTHER" id="PTHR11933:SF5">
    <property type="entry name" value="MITOCHONDRIAL TRNA-SPECIFIC 2-THIOURIDYLASE 1"/>
    <property type="match status" value="1"/>
</dbReference>
<dbReference type="PANTHER" id="PTHR11933">
    <property type="entry name" value="TRNA 5-METHYLAMINOMETHYL-2-THIOURIDYLATE -METHYLTRANSFERASE"/>
    <property type="match status" value="1"/>
</dbReference>
<dbReference type="Pfam" id="PF03054">
    <property type="entry name" value="tRNA_Me_trans"/>
    <property type="match status" value="1"/>
</dbReference>
<dbReference type="Pfam" id="PF20258">
    <property type="entry name" value="tRNA_Me_trans_C"/>
    <property type="match status" value="1"/>
</dbReference>
<dbReference type="Pfam" id="PF20259">
    <property type="entry name" value="tRNA_Me_trans_M"/>
    <property type="match status" value="1"/>
</dbReference>
<dbReference type="SUPFAM" id="SSF52402">
    <property type="entry name" value="Adenine nucleotide alpha hydrolases-like"/>
    <property type="match status" value="1"/>
</dbReference>
<comment type="function">
    <text evidence="1">Catalyzes the 2-thiolation of uridine at the wobble position (U34) of tRNA, leading to the formation of s(2)U34.</text>
</comment>
<comment type="catalytic activity">
    <reaction evidence="1">
        <text>S-sulfanyl-L-cysteinyl-[protein] + uridine(34) in tRNA + AH2 + ATP = 2-thiouridine(34) in tRNA + L-cysteinyl-[protein] + A + AMP + diphosphate + H(+)</text>
        <dbReference type="Rhea" id="RHEA:47032"/>
        <dbReference type="Rhea" id="RHEA-COMP:10131"/>
        <dbReference type="Rhea" id="RHEA-COMP:11726"/>
        <dbReference type="Rhea" id="RHEA-COMP:11727"/>
        <dbReference type="Rhea" id="RHEA-COMP:11728"/>
        <dbReference type="ChEBI" id="CHEBI:13193"/>
        <dbReference type="ChEBI" id="CHEBI:15378"/>
        <dbReference type="ChEBI" id="CHEBI:17499"/>
        <dbReference type="ChEBI" id="CHEBI:29950"/>
        <dbReference type="ChEBI" id="CHEBI:30616"/>
        <dbReference type="ChEBI" id="CHEBI:33019"/>
        <dbReference type="ChEBI" id="CHEBI:61963"/>
        <dbReference type="ChEBI" id="CHEBI:65315"/>
        <dbReference type="ChEBI" id="CHEBI:87170"/>
        <dbReference type="ChEBI" id="CHEBI:456215"/>
        <dbReference type="EC" id="2.8.1.13"/>
    </reaction>
</comment>
<comment type="subcellular location">
    <subcellularLocation>
        <location evidence="1">Cytoplasm</location>
    </subcellularLocation>
</comment>
<comment type="similarity">
    <text evidence="1">Belongs to the MnmA/TRMU family.</text>
</comment>
<accession>Q5HXB2</accession>
<feature type="chain" id="PRO_0000121619" description="tRNA-specific 2-thiouridylase MnmA">
    <location>
        <begin position="1"/>
        <end position="338"/>
    </location>
</feature>
<feature type="region of interest" description="Interaction with tRNA" evidence="1">
    <location>
        <begin position="134"/>
        <end position="136"/>
    </location>
</feature>
<feature type="region of interest" description="Interaction with tRNA" evidence="1">
    <location>
        <begin position="288"/>
        <end position="289"/>
    </location>
</feature>
<feature type="active site" description="Nucleophile" evidence="1">
    <location>
        <position position="92"/>
    </location>
</feature>
<feature type="active site" description="Cysteine persulfide intermediate" evidence="1">
    <location>
        <position position="186"/>
    </location>
</feature>
<feature type="binding site" evidence="1">
    <location>
        <begin position="6"/>
        <end position="13"/>
    </location>
    <ligand>
        <name>ATP</name>
        <dbReference type="ChEBI" id="CHEBI:30616"/>
    </ligand>
</feature>
<feature type="binding site" evidence="1">
    <location>
        <position position="32"/>
    </location>
    <ligand>
        <name>ATP</name>
        <dbReference type="ChEBI" id="CHEBI:30616"/>
    </ligand>
</feature>
<feature type="binding site" evidence="1">
    <location>
        <position position="116"/>
    </location>
    <ligand>
        <name>ATP</name>
        <dbReference type="ChEBI" id="CHEBI:30616"/>
    </ligand>
</feature>
<feature type="site" description="Interaction with tRNA" evidence="1">
    <location>
        <position position="117"/>
    </location>
</feature>
<feature type="site" description="Interaction with tRNA" evidence="1">
    <location>
        <position position="321"/>
    </location>
</feature>
<feature type="disulfide bond" description="Alternate" evidence="1">
    <location>
        <begin position="92"/>
        <end position="186"/>
    </location>
</feature>
<proteinExistence type="inferred from homology"/>
<sequence length="338" mass="38420">MKILVAMSGGVDSTVTAYKLKNLGHEVIGCYMKLHGKPNYHEENIKKVEKVANFLQIPYHILDLQEDFKNKVYMPFVDTYKEGKTPNPCALCNRFIKLGKLLEFAKSLGCEKLATGHYARLENNLIKTAVDESKDQSYFLASADKEALKYLIFPLGEMKKEDVKKFASTIEVLKSFATQKESSEICFVEDTYVQVLDQFMDTKIPGEVLDSSGKVVGKHEGYMHYTIGKRRGFEVRGAHEPHFVLKINPKQNQIIVGTKEELKISEFNLKNINLFIDAKELDCEVKIRYRSKSTPCKVEIYEDKSAKIILKDPVYGLASGQMAVFYDHDKVIASGFIE</sequence>
<reference key="1">
    <citation type="journal article" date="2005" name="PLoS Biol.">
        <title>Major structural differences and novel potential virulence mechanisms from the genomes of multiple Campylobacter species.</title>
        <authorList>
            <person name="Fouts D.E."/>
            <person name="Mongodin E.F."/>
            <person name="Mandrell R.E."/>
            <person name="Miller W.G."/>
            <person name="Rasko D.A."/>
            <person name="Ravel J."/>
            <person name="Brinkac L.M."/>
            <person name="DeBoy R.T."/>
            <person name="Parker C.T."/>
            <person name="Daugherty S.C."/>
            <person name="Dodson R.J."/>
            <person name="Durkin A.S."/>
            <person name="Madupu R."/>
            <person name="Sullivan S.A."/>
            <person name="Shetty J.U."/>
            <person name="Ayodeji M.A."/>
            <person name="Shvartsbeyn A."/>
            <person name="Schatz M.C."/>
            <person name="Badger J.H."/>
            <person name="Fraser C.M."/>
            <person name="Nelson K.E."/>
        </authorList>
    </citation>
    <scope>NUCLEOTIDE SEQUENCE [LARGE SCALE GENOMIC DNA]</scope>
    <source>
        <strain>RM1221</strain>
    </source>
</reference>
<protein>
    <recommendedName>
        <fullName evidence="1">tRNA-specific 2-thiouridylase MnmA</fullName>
        <ecNumber evidence="1">2.8.1.13</ecNumber>
    </recommendedName>
</protein>
<gene>
    <name evidence="1" type="primary">mnmA</name>
    <name type="synonym">trmU</name>
    <name type="ordered locus">CJE0048</name>
</gene>
<organism>
    <name type="scientific">Campylobacter jejuni (strain RM1221)</name>
    <dbReference type="NCBI Taxonomy" id="195099"/>
    <lineage>
        <taxon>Bacteria</taxon>
        <taxon>Pseudomonadati</taxon>
        <taxon>Campylobacterota</taxon>
        <taxon>Epsilonproteobacteria</taxon>
        <taxon>Campylobacterales</taxon>
        <taxon>Campylobacteraceae</taxon>
        <taxon>Campylobacter</taxon>
    </lineage>
</organism>
<name>MNMA_CAMJR</name>